<gene>
    <name type="primary">CNTFR</name>
</gene>
<accession>P26992</accession>
<accession>Q5U050</accession>
<proteinExistence type="evidence at protein level"/>
<name>CNTFR_HUMAN</name>
<feature type="signal peptide" evidence="1">
    <location>
        <begin position="1"/>
        <end position="22"/>
    </location>
</feature>
<feature type="chain" id="PRO_0000010991" description="Ciliary neurotrophic factor receptor subunit alpha">
    <location>
        <begin position="23"/>
        <end position="342"/>
    </location>
</feature>
<feature type="propeptide" id="PRO_0000010992" description="Removed in mature form" evidence="1">
    <location>
        <begin position="343"/>
        <end position="372"/>
    </location>
</feature>
<feature type="domain" description="Ig-like C2-type">
    <location>
        <begin position="27"/>
        <end position="104"/>
    </location>
</feature>
<feature type="domain" description="Fibronectin type-III 1" evidence="3">
    <location>
        <begin position="108"/>
        <end position="205"/>
    </location>
</feature>
<feature type="domain" description="Fibronectin type-III 2" evidence="3">
    <location>
        <begin position="206"/>
        <end position="306"/>
    </location>
</feature>
<feature type="region of interest" description="Disordered" evidence="4">
    <location>
        <begin position="301"/>
        <end position="340"/>
    </location>
</feature>
<feature type="short sequence motif" description="WSXWS motif">
    <location>
        <begin position="290"/>
        <end position="294"/>
    </location>
</feature>
<feature type="compositionally biased region" description="Low complexity" evidence="4">
    <location>
        <begin position="311"/>
        <end position="326"/>
    </location>
</feature>
<feature type="lipid moiety-binding region" description="GPI-anchor amidated serine" evidence="1">
    <location>
        <position position="342"/>
    </location>
</feature>
<feature type="glycosylation site" description="N-linked (GlcNAc...) asparagine" evidence="1">
    <location>
        <position position="60"/>
    </location>
</feature>
<feature type="glycosylation site" description="N-linked (GlcNAc...) asparagine" evidence="1">
    <location>
        <position position="70"/>
    </location>
</feature>
<feature type="glycosylation site" description="N-linked (GlcNAc...) asparagine" evidence="1">
    <location>
        <position position="142"/>
    </location>
</feature>
<feature type="glycosylation site" description="N-linked (GlcNAc...) asparagine" evidence="1">
    <location>
        <position position="190"/>
    </location>
</feature>
<feature type="disulfide bond" evidence="2">
    <location>
        <begin position="46"/>
        <end position="89"/>
    </location>
</feature>
<feature type="strand" evidence="10">
    <location>
        <begin position="32"/>
        <end position="37"/>
    </location>
</feature>
<feature type="strand" evidence="10">
    <location>
        <begin position="42"/>
        <end position="44"/>
    </location>
</feature>
<feature type="strand" evidence="10">
    <location>
        <begin position="51"/>
        <end position="53"/>
    </location>
</feature>
<feature type="strand" evidence="10">
    <location>
        <begin position="55"/>
        <end position="59"/>
    </location>
</feature>
<feature type="helix" evidence="10">
    <location>
        <begin position="66"/>
        <end position="68"/>
    </location>
</feature>
<feature type="strand" evidence="10">
    <location>
        <begin position="73"/>
        <end position="76"/>
    </location>
</feature>
<feature type="helix" evidence="11">
    <location>
        <begin position="81"/>
        <end position="83"/>
    </location>
</feature>
<feature type="strand" evidence="10">
    <location>
        <begin position="85"/>
        <end position="91"/>
    </location>
</feature>
<feature type="strand" evidence="10">
    <location>
        <begin position="97"/>
        <end position="106"/>
    </location>
</feature>
<feature type="strand" evidence="10">
    <location>
        <begin position="113"/>
        <end position="119"/>
    </location>
</feature>
<feature type="strand" evidence="10">
    <location>
        <begin position="121"/>
        <end position="123"/>
    </location>
</feature>
<feature type="strand" evidence="10">
    <location>
        <begin position="126"/>
        <end position="130"/>
    </location>
</feature>
<feature type="strand" evidence="10">
    <location>
        <begin position="140"/>
        <end position="147"/>
    </location>
</feature>
<feature type="strand" evidence="10">
    <location>
        <begin position="159"/>
        <end position="162"/>
    </location>
</feature>
<feature type="strand" evidence="10">
    <location>
        <begin position="177"/>
        <end position="184"/>
    </location>
</feature>
<feature type="strand" evidence="10">
    <location>
        <begin position="189"/>
        <end position="196"/>
    </location>
</feature>
<feature type="turn" evidence="11">
    <location>
        <begin position="198"/>
        <end position="200"/>
    </location>
</feature>
<feature type="strand" evidence="10">
    <location>
        <begin position="211"/>
        <end position="213"/>
    </location>
</feature>
<feature type="strand" evidence="10">
    <location>
        <begin position="223"/>
        <end position="225"/>
    </location>
</feature>
<feature type="strand" evidence="10">
    <location>
        <begin position="236"/>
        <end position="238"/>
    </location>
</feature>
<feature type="strand" evidence="10">
    <location>
        <begin position="243"/>
        <end position="251"/>
    </location>
</feature>
<feature type="strand" evidence="9">
    <location>
        <begin position="255"/>
        <end position="258"/>
    </location>
</feature>
<feature type="strand" evidence="10">
    <location>
        <begin position="261"/>
        <end position="266"/>
    </location>
</feature>
<feature type="strand" evidence="10">
    <location>
        <begin position="272"/>
        <end position="274"/>
    </location>
</feature>
<feature type="strand" evidence="10">
    <location>
        <begin position="276"/>
        <end position="280"/>
    </location>
</feature>
<feature type="strand" evidence="10">
    <location>
        <begin position="283"/>
        <end position="288"/>
    </location>
</feature>
<feature type="strand" evidence="8">
    <location>
        <begin position="295"/>
        <end position="299"/>
    </location>
</feature>
<reference key="1">
    <citation type="journal article" date="1991" name="Science">
        <title>The receptor for ciliary neurotrophic factor.</title>
        <authorList>
            <person name="Davis S."/>
            <person name="Aldrich T.H."/>
            <person name="Valenzuela D.M."/>
            <person name="Wong V."/>
            <person name="Furth M.E."/>
            <person name="Squinto S.P."/>
            <person name="Yancopoulos G.D."/>
        </authorList>
    </citation>
    <scope>NUCLEOTIDE SEQUENCE [MRNA]</scope>
</reference>
<reference key="2">
    <citation type="journal article" date="1995" name="Genomics">
        <title>Genomic organization and chromosomal localization of the human and mouse genes encoding the alpha receptor component for ciliary neurotrophic factor.</title>
        <authorList>
            <person name="Valenzuela D.M."/>
            <person name="Rojas E."/>
            <person name="le Beau M.M."/>
            <person name="Espinosa R."/>
            <person name="Brannan C.I."/>
            <person name="McClain J."/>
            <person name="Masiakowski P."/>
            <person name="Ip N.Y."/>
            <person name="Copeland N.G."/>
            <person name="Jenkins N.A."/>
            <person name="Yancopoulos G.D."/>
        </authorList>
    </citation>
    <scope>NUCLEOTIDE SEQUENCE [GENOMIC DNA]</scope>
</reference>
<reference key="3">
    <citation type="submission" date="2004-10" db="EMBL/GenBank/DDBJ databases">
        <title>Cloning of human full-length CDSs in BD Creator(TM) system donor vector.</title>
        <authorList>
            <person name="Kalnine N."/>
            <person name="Chen X."/>
            <person name="Rolfs A."/>
            <person name="Halleck A."/>
            <person name="Hines L."/>
            <person name="Eisenstein S."/>
            <person name="Koundinya M."/>
            <person name="Raphael J."/>
            <person name="Moreira D."/>
            <person name="Kelley T."/>
            <person name="LaBaer J."/>
            <person name="Lin Y."/>
            <person name="Phelan M."/>
            <person name="Farmer A."/>
        </authorList>
    </citation>
    <scope>NUCLEOTIDE SEQUENCE [LARGE SCALE MRNA]</scope>
</reference>
<reference key="4">
    <citation type="journal article" date="2004" name="Nature">
        <title>DNA sequence and analysis of human chromosome 9.</title>
        <authorList>
            <person name="Humphray S.J."/>
            <person name="Oliver K."/>
            <person name="Hunt A.R."/>
            <person name="Plumb R.W."/>
            <person name="Loveland J.E."/>
            <person name="Howe K.L."/>
            <person name="Andrews T.D."/>
            <person name="Searle S."/>
            <person name="Hunt S.E."/>
            <person name="Scott C.E."/>
            <person name="Jones M.C."/>
            <person name="Ainscough R."/>
            <person name="Almeida J.P."/>
            <person name="Ambrose K.D."/>
            <person name="Ashwell R.I.S."/>
            <person name="Babbage A.K."/>
            <person name="Babbage S."/>
            <person name="Bagguley C.L."/>
            <person name="Bailey J."/>
            <person name="Banerjee R."/>
            <person name="Barker D.J."/>
            <person name="Barlow K.F."/>
            <person name="Bates K."/>
            <person name="Beasley H."/>
            <person name="Beasley O."/>
            <person name="Bird C.P."/>
            <person name="Bray-Allen S."/>
            <person name="Brown A.J."/>
            <person name="Brown J.Y."/>
            <person name="Burford D."/>
            <person name="Burrill W."/>
            <person name="Burton J."/>
            <person name="Carder C."/>
            <person name="Carter N.P."/>
            <person name="Chapman J.C."/>
            <person name="Chen Y."/>
            <person name="Clarke G."/>
            <person name="Clark S.Y."/>
            <person name="Clee C.M."/>
            <person name="Clegg S."/>
            <person name="Collier R.E."/>
            <person name="Corby N."/>
            <person name="Crosier M."/>
            <person name="Cummings A.T."/>
            <person name="Davies J."/>
            <person name="Dhami P."/>
            <person name="Dunn M."/>
            <person name="Dutta I."/>
            <person name="Dyer L.W."/>
            <person name="Earthrowl M.E."/>
            <person name="Faulkner L."/>
            <person name="Fleming C.J."/>
            <person name="Frankish A."/>
            <person name="Frankland J.A."/>
            <person name="French L."/>
            <person name="Fricker D.G."/>
            <person name="Garner P."/>
            <person name="Garnett J."/>
            <person name="Ghori J."/>
            <person name="Gilbert J.G.R."/>
            <person name="Glison C."/>
            <person name="Grafham D.V."/>
            <person name="Gribble S."/>
            <person name="Griffiths C."/>
            <person name="Griffiths-Jones S."/>
            <person name="Grocock R."/>
            <person name="Guy J."/>
            <person name="Hall R.E."/>
            <person name="Hammond S."/>
            <person name="Harley J.L."/>
            <person name="Harrison E.S.I."/>
            <person name="Hart E.A."/>
            <person name="Heath P.D."/>
            <person name="Henderson C.D."/>
            <person name="Hopkins B.L."/>
            <person name="Howard P.J."/>
            <person name="Howden P.J."/>
            <person name="Huckle E."/>
            <person name="Johnson C."/>
            <person name="Johnson D."/>
            <person name="Joy A.A."/>
            <person name="Kay M."/>
            <person name="Keenan S."/>
            <person name="Kershaw J.K."/>
            <person name="Kimberley A.M."/>
            <person name="King A."/>
            <person name="Knights A."/>
            <person name="Laird G.K."/>
            <person name="Langford C."/>
            <person name="Lawlor S."/>
            <person name="Leongamornlert D.A."/>
            <person name="Leversha M."/>
            <person name="Lloyd C."/>
            <person name="Lloyd D.M."/>
            <person name="Lovell J."/>
            <person name="Martin S."/>
            <person name="Mashreghi-Mohammadi M."/>
            <person name="Matthews L."/>
            <person name="McLaren S."/>
            <person name="McLay K.E."/>
            <person name="McMurray A."/>
            <person name="Milne S."/>
            <person name="Nickerson T."/>
            <person name="Nisbett J."/>
            <person name="Nordsiek G."/>
            <person name="Pearce A.V."/>
            <person name="Peck A.I."/>
            <person name="Porter K.M."/>
            <person name="Pandian R."/>
            <person name="Pelan S."/>
            <person name="Phillimore B."/>
            <person name="Povey S."/>
            <person name="Ramsey Y."/>
            <person name="Rand V."/>
            <person name="Scharfe M."/>
            <person name="Sehra H.K."/>
            <person name="Shownkeen R."/>
            <person name="Sims S.K."/>
            <person name="Skuce C.D."/>
            <person name="Smith M."/>
            <person name="Steward C.A."/>
            <person name="Swarbreck D."/>
            <person name="Sycamore N."/>
            <person name="Tester J."/>
            <person name="Thorpe A."/>
            <person name="Tracey A."/>
            <person name="Tromans A."/>
            <person name="Thomas D.W."/>
            <person name="Wall M."/>
            <person name="Wallis J.M."/>
            <person name="West A.P."/>
            <person name="Whitehead S.L."/>
            <person name="Willey D.L."/>
            <person name="Williams S.A."/>
            <person name="Wilming L."/>
            <person name="Wray P.W."/>
            <person name="Young L."/>
            <person name="Ashurst J.L."/>
            <person name="Coulson A."/>
            <person name="Blocker H."/>
            <person name="Durbin R.M."/>
            <person name="Sulston J.E."/>
            <person name="Hubbard T."/>
            <person name="Jackson M.J."/>
            <person name="Bentley D.R."/>
            <person name="Beck S."/>
            <person name="Rogers J."/>
            <person name="Dunham I."/>
        </authorList>
    </citation>
    <scope>NUCLEOTIDE SEQUENCE [LARGE SCALE GENOMIC DNA]</scope>
</reference>
<reference key="5">
    <citation type="submission" date="2005-09" db="EMBL/GenBank/DDBJ databases">
        <authorList>
            <person name="Mural R.J."/>
            <person name="Istrail S."/>
            <person name="Sutton G."/>
            <person name="Florea L."/>
            <person name="Halpern A.L."/>
            <person name="Mobarry C.M."/>
            <person name="Lippert R."/>
            <person name="Walenz B."/>
            <person name="Shatkay H."/>
            <person name="Dew I."/>
            <person name="Miller J.R."/>
            <person name="Flanigan M.J."/>
            <person name="Edwards N.J."/>
            <person name="Bolanos R."/>
            <person name="Fasulo D."/>
            <person name="Halldorsson B.V."/>
            <person name="Hannenhalli S."/>
            <person name="Turner R."/>
            <person name="Yooseph S."/>
            <person name="Lu F."/>
            <person name="Nusskern D.R."/>
            <person name="Shue B.C."/>
            <person name="Zheng X.H."/>
            <person name="Zhong F."/>
            <person name="Delcher A.L."/>
            <person name="Huson D.H."/>
            <person name="Kravitz S.A."/>
            <person name="Mouchard L."/>
            <person name="Reinert K."/>
            <person name="Remington K.A."/>
            <person name="Clark A.G."/>
            <person name="Waterman M.S."/>
            <person name="Eichler E.E."/>
            <person name="Adams M.D."/>
            <person name="Hunkapiller M.W."/>
            <person name="Myers E.W."/>
            <person name="Venter J.C."/>
        </authorList>
    </citation>
    <scope>NUCLEOTIDE SEQUENCE [LARGE SCALE GENOMIC DNA]</scope>
</reference>
<reference key="6">
    <citation type="journal article" date="2004" name="Genome Res.">
        <title>The status, quality, and expansion of the NIH full-length cDNA project: the Mammalian Gene Collection (MGC).</title>
        <authorList>
            <consortium name="The MGC Project Team"/>
        </authorList>
    </citation>
    <scope>NUCLEOTIDE SEQUENCE [LARGE SCALE MRNA]</scope>
    <source>
        <tissue>Brain</tissue>
    </source>
</reference>
<reference key="7">
    <citation type="journal article" date="2009" name="Mol. Biol. Cell">
        <title>Humanin inhibits neuronal cell death by interacting with a cytokine receptor complex or complexes involving CNTF receptor alpha/WSX-1/gp130.</title>
        <authorList>
            <person name="Hashimoto Y."/>
            <person name="Kurita M."/>
            <person name="Aiso S."/>
            <person name="Nishimoto I."/>
            <person name="Matsuoka M."/>
        </authorList>
    </citation>
    <scope>FUNCTION</scope>
    <scope>IDENTIFICATION IN HUMANIN RECEPTOR COMPLEX</scope>
</reference>
<reference key="8">
    <citation type="journal article" date="2016" name="Mol. Cell. Biol.">
        <title>Cytokine-like factor 1, an essential facilitator of cardiotrophin-like cytokine:ciliary neurotrophic factor receptor alpha signaling and sorLA-mediated turnover.</title>
        <authorList>
            <person name="Larsen J.V."/>
            <person name="Kristensen A.M."/>
            <person name="Pallesen L.T."/>
            <person name="Bauer J."/>
            <person name="Vaegter C.B."/>
            <person name="Nielsen M.S."/>
            <person name="Madsen P."/>
            <person name="Petersen C.M."/>
        </authorList>
    </citation>
    <scope>FUNCTION</scope>
    <scope>INTERACTION WITH CLCF1; CRLF1 AND SORL1</scope>
</reference>
<reference key="9">
    <citation type="journal article" date="2003" name="J. Biol. Chem.">
        <title>Solution structure of the C-terminal domain of the ciliary neurotrophic factor (CNTF) receptor and ligand free associations among components of the CNTF receptor complex.</title>
        <authorList>
            <person name="Man D."/>
            <person name="He W."/>
            <person name="Sze K.H."/>
            <person name="Gong K."/>
            <person name="Smith D.K."/>
            <person name="Zhu G."/>
            <person name="Ip N.Y."/>
        </authorList>
    </citation>
    <scope>STRUCTURE BY NMR OF 202-305</scope>
</reference>
<keyword id="KW-0002">3D-structure</keyword>
<keyword id="KW-1003">Cell membrane</keyword>
<keyword id="KW-1015">Disulfide bond</keyword>
<keyword id="KW-0325">Glycoprotein</keyword>
<keyword id="KW-0336">GPI-anchor</keyword>
<keyword id="KW-0393">Immunoglobulin domain</keyword>
<keyword id="KW-0449">Lipoprotein</keyword>
<keyword id="KW-0472">Membrane</keyword>
<keyword id="KW-1267">Proteomics identification</keyword>
<keyword id="KW-0675">Receptor</keyword>
<keyword id="KW-1185">Reference proteome</keyword>
<keyword id="KW-0677">Repeat</keyword>
<keyword id="KW-0732">Signal</keyword>
<organism>
    <name type="scientific">Homo sapiens</name>
    <name type="common">Human</name>
    <dbReference type="NCBI Taxonomy" id="9606"/>
    <lineage>
        <taxon>Eukaryota</taxon>
        <taxon>Metazoa</taxon>
        <taxon>Chordata</taxon>
        <taxon>Craniata</taxon>
        <taxon>Vertebrata</taxon>
        <taxon>Euteleostomi</taxon>
        <taxon>Mammalia</taxon>
        <taxon>Eutheria</taxon>
        <taxon>Euarchontoglires</taxon>
        <taxon>Primates</taxon>
        <taxon>Haplorrhini</taxon>
        <taxon>Catarrhini</taxon>
        <taxon>Hominidae</taxon>
        <taxon>Homo</taxon>
    </lineage>
</organism>
<dbReference type="EMBL" id="M73238">
    <property type="protein sequence ID" value="AAA35707.1"/>
    <property type="molecule type" value="mRNA"/>
</dbReference>
<dbReference type="EMBL" id="L38025">
    <property type="protein sequence ID" value="AAA91337.1"/>
    <property type="molecule type" value="Genomic_DNA"/>
</dbReference>
<dbReference type="EMBL" id="L38022">
    <property type="protein sequence ID" value="AAA91337.1"/>
    <property type="status" value="JOINED"/>
    <property type="molecule type" value="Genomic_DNA"/>
</dbReference>
<dbReference type="EMBL" id="L38023">
    <property type="protein sequence ID" value="AAA91337.1"/>
    <property type="status" value="JOINED"/>
    <property type="molecule type" value="Genomic_DNA"/>
</dbReference>
<dbReference type="EMBL" id="L38024">
    <property type="protein sequence ID" value="AAA91337.1"/>
    <property type="status" value="JOINED"/>
    <property type="molecule type" value="Genomic_DNA"/>
</dbReference>
<dbReference type="EMBL" id="BT019824">
    <property type="protein sequence ID" value="AAV38627.1"/>
    <property type="molecule type" value="mRNA"/>
</dbReference>
<dbReference type="EMBL" id="AL160270">
    <property type="status" value="NOT_ANNOTATED_CDS"/>
    <property type="molecule type" value="Genomic_DNA"/>
</dbReference>
<dbReference type="EMBL" id="CH471071">
    <property type="protein sequence ID" value="EAW58445.1"/>
    <property type="molecule type" value="Genomic_DNA"/>
</dbReference>
<dbReference type="EMBL" id="CH471071">
    <property type="protein sequence ID" value="EAW58446.1"/>
    <property type="molecule type" value="Genomic_DNA"/>
</dbReference>
<dbReference type="EMBL" id="CH471071">
    <property type="protein sequence ID" value="EAW58447.1"/>
    <property type="molecule type" value="Genomic_DNA"/>
</dbReference>
<dbReference type="EMBL" id="CH471071">
    <property type="protein sequence ID" value="EAW58448.1"/>
    <property type="molecule type" value="Genomic_DNA"/>
</dbReference>
<dbReference type="EMBL" id="BC001492">
    <property type="protein sequence ID" value="AAH01492.1"/>
    <property type="molecule type" value="mRNA"/>
</dbReference>
<dbReference type="CCDS" id="CCDS6558.1"/>
<dbReference type="PIR" id="A40854">
    <property type="entry name" value="UHHUCN"/>
</dbReference>
<dbReference type="RefSeq" id="NP_001193940.1">
    <property type="nucleotide sequence ID" value="NM_001207011.2"/>
</dbReference>
<dbReference type="RefSeq" id="NP_001833.1">
    <property type="nucleotide sequence ID" value="NM_001842.5"/>
</dbReference>
<dbReference type="RefSeq" id="NP_671693.1">
    <property type="nucleotide sequence ID" value="NM_147164.3"/>
</dbReference>
<dbReference type="RefSeq" id="XP_016869752.1">
    <property type="nucleotide sequence ID" value="XM_017014263.2"/>
</dbReference>
<dbReference type="RefSeq" id="XP_016869753.1">
    <property type="nucleotide sequence ID" value="XM_017014264.2"/>
</dbReference>
<dbReference type="RefSeq" id="XP_016869754.1">
    <property type="nucleotide sequence ID" value="XM_017014265.2"/>
</dbReference>
<dbReference type="RefSeq" id="XP_047278713.1">
    <property type="nucleotide sequence ID" value="XM_047422757.1"/>
</dbReference>
<dbReference type="RefSeq" id="XP_047278714.1">
    <property type="nucleotide sequence ID" value="XM_047422758.1"/>
</dbReference>
<dbReference type="RefSeq" id="XP_054217932.1">
    <property type="nucleotide sequence ID" value="XM_054361957.1"/>
</dbReference>
<dbReference type="RefSeq" id="XP_054217933.1">
    <property type="nucleotide sequence ID" value="XM_054361958.1"/>
</dbReference>
<dbReference type="RefSeq" id="XP_054217934.1">
    <property type="nucleotide sequence ID" value="XM_054361959.1"/>
</dbReference>
<dbReference type="RefSeq" id="XP_054217935.1">
    <property type="nucleotide sequence ID" value="XM_054361960.1"/>
</dbReference>
<dbReference type="RefSeq" id="XP_054217936.1">
    <property type="nucleotide sequence ID" value="XM_054361961.1"/>
</dbReference>
<dbReference type="PDB" id="1UC6">
    <property type="method" value="NMR"/>
    <property type="chains" value="A=202-305"/>
</dbReference>
<dbReference type="PDB" id="8D74">
    <property type="method" value="EM"/>
    <property type="resolution" value="3.03 A"/>
    <property type="chains" value="C=23-342"/>
</dbReference>
<dbReference type="PDB" id="8D7E">
    <property type="method" value="EM"/>
    <property type="resolution" value="2.93 A"/>
    <property type="chains" value="C=23-342"/>
</dbReference>
<dbReference type="PDB" id="8D7H">
    <property type="method" value="EM"/>
    <property type="resolution" value="3.40 A"/>
    <property type="chains" value="C/G=23-342"/>
</dbReference>
<dbReference type="PDB" id="8D7R">
    <property type="method" value="EM"/>
    <property type="resolution" value="3.90 A"/>
    <property type="chains" value="C=23-346"/>
</dbReference>
<dbReference type="PDBsum" id="1UC6"/>
<dbReference type="PDBsum" id="8D74"/>
<dbReference type="PDBsum" id="8D7E"/>
<dbReference type="PDBsum" id="8D7H"/>
<dbReference type="PDBsum" id="8D7R"/>
<dbReference type="BMRB" id="P26992"/>
<dbReference type="EMDB" id="EMD-27227"/>
<dbReference type="EMDB" id="EMD-27228"/>
<dbReference type="EMDB" id="EMD-27229"/>
<dbReference type="EMDB" id="EMD-27230"/>
<dbReference type="EMDB" id="EMD-27231"/>
<dbReference type="SMR" id="P26992"/>
<dbReference type="BioGRID" id="107671">
    <property type="interactions" value="18"/>
</dbReference>
<dbReference type="CORUM" id="P26992"/>
<dbReference type="DIP" id="DIP-5777N"/>
<dbReference type="FunCoup" id="P26992">
    <property type="interactions" value="550"/>
</dbReference>
<dbReference type="IntAct" id="P26992">
    <property type="interactions" value="16"/>
</dbReference>
<dbReference type="MINT" id="P26992"/>
<dbReference type="STRING" id="9606.ENSP00000368265"/>
<dbReference type="TCDB" id="8.A.152.2.1">
    <property type="family name" value="the interleukin receptor (ilr) family"/>
</dbReference>
<dbReference type="GlyCosmos" id="P26992">
    <property type="glycosylation" value="4 sites, No reported glycans"/>
</dbReference>
<dbReference type="GlyGen" id="P26992">
    <property type="glycosylation" value="4 sites"/>
</dbReference>
<dbReference type="PhosphoSitePlus" id="P26992"/>
<dbReference type="SwissPalm" id="P26992"/>
<dbReference type="BioMuta" id="CNTFR"/>
<dbReference type="DMDM" id="1352099"/>
<dbReference type="jPOST" id="P26992"/>
<dbReference type="MassIVE" id="P26992"/>
<dbReference type="PaxDb" id="9606-ENSP00000368265"/>
<dbReference type="PeptideAtlas" id="P26992"/>
<dbReference type="ProteomicsDB" id="54371"/>
<dbReference type="Antibodypedia" id="25488">
    <property type="antibodies" value="321 antibodies from 38 providers"/>
</dbReference>
<dbReference type="DNASU" id="1271"/>
<dbReference type="Ensembl" id="ENST00000351266.8">
    <property type="protein sequence ID" value="ENSP00000242338.4"/>
    <property type="gene ID" value="ENSG00000122756.15"/>
</dbReference>
<dbReference type="Ensembl" id="ENST00000378980.8">
    <property type="protein sequence ID" value="ENSP00000368265.3"/>
    <property type="gene ID" value="ENSG00000122756.15"/>
</dbReference>
<dbReference type="Ensembl" id="ENST00000610543.4">
    <property type="protein sequence ID" value="ENSP00000480451.1"/>
    <property type="gene ID" value="ENSG00000122756.15"/>
</dbReference>
<dbReference type="GeneID" id="1271"/>
<dbReference type="KEGG" id="hsa:1271"/>
<dbReference type="MANE-Select" id="ENST00000378980.8">
    <property type="protein sequence ID" value="ENSP00000368265.3"/>
    <property type="RefSeq nucleotide sequence ID" value="NM_147164.3"/>
    <property type="RefSeq protein sequence ID" value="NP_671693.1"/>
</dbReference>
<dbReference type="UCSC" id="uc003zup.2">
    <property type="organism name" value="human"/>
</dbReference>
<dbReference type="AGR" id="HGNC:2170"/>
<dbReference type="CTD" id="1271"/>
<dbReference type="DisGeNET" id="1271"/>
<dbReference type="GeneCards" id="CNTFR"/>
<dbReference type="HGNC" id="HGNC:2170">
    <property type="gene designation" value="CNTFR"/>
</dbReference>
<dbReference type="HPA" id="ENSG00000122756">
    <property type="expression patterns" value="Tissue enhanced (brain, skeletal muscle)"/>
</dbReference>
<dbReference type="MalaCards" id="CNTFR"/>
<dbReference type="MIM" id="118946">
    <property type="type" value="gene"/>
</dbReference>
<dbReference type="neXtProt" id="NX_P26992"/>
<dbReference type="OpenTargets" id="ENSG00000122756"/>
<dbReference type="PharmGKB" id="PA26684"/>
<dbReference type="VEuPathDB" id="HostDB:ENSG00000122756"/>
<dbReference type="eggNOG" id="ENOG502QUDK">
    <property type="taxonomic scope" value="Eukaryota"/>
</dbReference>
<dbReference type="GeneTree" id="ENSGT00940000158864"/>
<dbReference type="InParanoid" id="P26992"/>
<dbReference type="OMA" id="KICDTGE"/>
<dbReference type="OrthoDB" id="9927622at2759"/>
<dbReference type="PAN-GO" id="P26992">
    <property type="GO annotations" value="7 GO annotations based on evolutionary models"/>
</dbReference>
<dbReference type="PhylomeDB" id="P26992"/>
<dbReference type="TreeFam" id="TF331210"/>
<dbReference type="PathwayCommons" id="P26992"/>
<dbReference type="Reactome" id="R-HSA-6788467">
    <property type="pathway name" value="IL-6-type cytokine receptor ligand interactions"/>
</dbReference>
<dbReference type="SignaLink" id="P26992"/>
<dbReference type="SIGNOR" id="P26992"/>
<dbReference type="BioGRID-ORCS" id="1271">
    <property type="hits" value="8 hits in 1141 CRISPR screens"/>
</dbReference>
<dbReference type="ChiTaRS" id="CNTFR">
    <property type="organism name" value="human"/>
</dbReference>
<dbReference type="EvolutionaryTrace" id="P26992"/>
<dbReference type="GenomeRNAi" id="1271"/>
<dbReference type="Pharos" id="P26992">
    <property type="development level" value="Tbio"/>
</dbReference>
<dbReference type="PRO" id="PR:P26992"/>
<dbReference type="Proteomes" id="UP000005640">
    <property type="component" value="Chromosome 9"/>
</dbReference>
<dbReference type="RNAct" id="P26992">
    <property type="molecule type" value="protein"/>
</dbReference>
<dbReference type="Bgee" id="ENSG00000122756">
    <property type="expression patterns" value="Expressed in ventricular zone and 99 other cell types or tissues"/>
</dbReference>
<dbReference type="ExpressionAtlas" id="P26992">
    <property type="expression patterns" value="baseline and differential"/>
</dbReference>
<dbReference type="GO" id="GO:0016324">
    <property type="term" value="C:apical plasma membrane"/>
    <property type="evidence" value="ECO:0000314"/>
    <property type="project" value="CACAO"/>
</dbReference>
<dbReference type="GO" id="GO:0070110">
    <property type="term" value="C:ciliary neurotrophic factor receptor complex"/>
    <property type="evidence" value="ECO:0000314"/>
    <property type="project" value="BHF-UCL"/>
</dbReference>
<dbReference type="GO" id="GO:0097059">
    <property type="term" value="C:CNTFR-CLCF1 complex"/>
    <property type="evidence" value="ECO:0000314"/>
    <property type="project" value="BHF-UCL"/>
</dbReference>
<dbReference type="GO" id="GO:0009897">
    <property type="term" value="C:external side of plasma membrane"/>
    <property type="evidence" value="ECO:0000318"/>
    <property type="project" value="GO_Central"/>
</dbReference>
<dbReference type="GO" id="GO:0019898">
    <property type="term" value="C:extrinsic component of membrane"/>
    <property type="evidence" value="ECO:0000304"/>
    <property type="project" value="ProtInc"/>
</dbReference>
<dbReference type="GO" id="GO:0005886">
    <property type="term" value="C:plasma membrane"/>
    <property type="evidence" value="ECO:0000304"/>
    <property type="project" value="Reactome"/>
</dbReference>
<dbReference type="GO" id="GO:0004897">
    <property type="term" value="F:ciliary neurotrophic factor receptor activity"/>
    <property type="evidence" value="ECO:0000304"/>
    <property type="project" value="ProtInc"/>
</dbReference>
<dbReference type="GO" id="GO:0019955">
    <property type="term" value="F:cytokine binding"/>
    <property type="evidence" value="ECO:0000353"/>
    <property type="project" value="HGNC-UCL"/>
</dbReference>
<dbReference type="GO" id="GO:0019970">
    <property type="term" value="F:interleukin-11 binding"/>
    <property type="evidence" value="ECO:0000318"/>
    <property type="project" value="GO_Central"/>
</dbReference>
<dbReference type="GO" id="GO:0004921">
    <property type="term" value="F:interleukin-11 receptor activity"/>
    <property type="evidence" value="ECO:0000318"/>
    <property type="project" value="GO_Central"/>
</dbReference>
<dbReference type="GO" id="GO:0005102">
    <property type="term" value="F:signaling receptor binding"/>
    <property type="evidence" value="ECO:0000353"/>
    <property type="project" value="BHF-UCL"/>
</dbReference>
<dbReference type="GO" id="GO:0003360">
    <property type="term" value="P:brainstem development"/>
    <property type="evidence" value="ECO:0007669"/>
    <property type="project" value="Ensembl"/>
</dbReference>
<dbReference type="GO" id="GO:0070120">
    <property type="term" value="P:ciliary neurotrophic factor-mediated signaling pathway"/>
    <property type="evidence" value="ECO:0000314"/>
    <property type="project" value="BHF-UCL"/>
</dbReference>
<dbReference type="GO" id="GO:0097049">
    <property type="term" value="P:motor neuron apoptotic process"/>
    <property type="evidence" value="ECO:0007669"/>
    <property type="project" value="Ensembl"/>
</dbReference>
<dbReference type="GO" id="GO:2000672">
    <property type="term" value="P:negative regulation of motor neuron apoptotic process"/>
    <property type="evidence" value="ECO:0007669"/>
    <property type="project" value="Ensembl"/>
</dbReference>
<dbReference type="GO" id="GO:0043524">
    <property type="term" value="P:negative regulation of neuron apoptotic process"/>
    <property type="evidence" value="ECO:0000315"/>
    <property type="project" value="UniProtKB"/>
</dbReference>
<dbReference type="GO" id="GO:0007399">
    <property type="term" value="P:nervous system development"/>
    <property type="evidence" value="ECO:0000304"/>
    <property type="project" value="ProtInc"/>
</dbReference>
<dbReference type="GO" id="GO:0008284">
    <property type="term" value="P:positive regulation of cell population proliferation"/>
    <property type="evidence" value="ECO:0000318"/>
    <property type="project" value="GO_Central"/>
</dbReference>
<dbReference type="GO" id="GO:0007548">
    <property type="term" value="P:sex differentiation"/>
    <property type="evidence" value="ECO:0007669"/>
    <property type="project" value="Ensembl"/>
</dbReference>
<dbReference type="GO" id="GO:0007165">
    <property type="term" value="P:signal transduction"/>
    <property type="evidence" value="ECO:0000303"/>
    <property type="project" value="ProtInc"/>
</dbReference>
<dbReference type="GO" id="GO:0060538">
    <property type="term" value="P:skeletal muscle organ development"/>
    <property type="evidence" value="ECO:0007669"/>
    <property type="project" value="Ensembl"/>
</dbReference>
<dbReference type="GO" id="GO:0001967">
    <property type="term" value="P:suckling behavior"/>
    <property type="evidence" value="ECO:0007669"/>
    <property type="project" value="Ensembl"/>
</dbReference>
<dbReference type="CDD" id="cd00063">
    <property type="entry name" value="FN3"/>
    <property type="match status" value="1"/>
</dbReference>
<dbReference type="FunFam" id="2.60.40.10:FF:000136">
    <property type="entry name" value="Ciliary neurotrophic factor receptor alpha"/>
    <property type="match status" value="1"/>
</dbReference>
<dbReference type="FunFam" id="2.60.40.10:FF:000564">
    <property type="entry name" value="Ciliary neurotrophic factor receptor subunit alpha"/>
    <property type="match status" value="1"/>
</dbReference>
<dbReference type="FunFam" id="2.60.40.10:FF:000944">
    <property type="entry name" value="Ciliary neurotrophic factor receptor subunit alpha"/>
    <property type="match status" value="1"/>
</dbReference>
<dbReference type="Gene3D" id="2.60.40.10">
    <property type="entry name" value="Immunoglobulins"/>
    <property type="match status" value="3"/>
</dbReference>
<dbReference type="InterPro" id="IPR003961">
    <property type="entry name" value="FN3_dom"/>
</dbReference>
<dbReference type="InterPro" id="IPR036116">
    <property type="entry name" value="FN3_sf"/>
</dbReference>
<dbReference type="InterPro" id="IPR003530">
    <property type="entry name" value="Hematopoietin_rcpt_L_F3_CS"/>
</dbReference>
<dbReference type="InterPro" id="IPR007110">
    <property type="entry name" value="Ig-like_dom"/>
</dbReference>
<dbReference type="InterPro" id="IPR036179">
    <property type="entry name" value="Ig-like_dom_sf"/>
</dbReference>
<dbReference type="InterPro" id="IPR013783">
    <property type="entry name" value="Ig-like_fold"/>
</dbReference>
<dbReference type="InterPro" id="IPR003599">
    <property type="entry name" value="Ig_sub"/>
</dbReference>
<dbReference type="InterPro" id="IPR003598">
    <property type="entry name" value="Ig_sub2"/>
</dbReference>
<dbReference type="InterPro" id="IPR050379">
    <property type="entry name" value="Type-I_Cytokine_Rcpt"/>
</dbReference>
<dbReference type="PANTHER" id="PTHR23036:SF21">
    <property type="entry name" value="CILIARY NEUROTROPHIC FACTOR RECEPTOR SUBUNIT ALPHA"/>
    <property type="match status" value="1"/>
</dbReference>
<dbReference type="PANTHER" id="PTHR23036">
    <property type="entry name" value="CYTOKINE RECEPTOR"/>
    <property type="match status" value="1"/>
</dbReference>
<dbReference type="Pfam" id="PF00041">
    <property type="entry name" value="fn3"/>
    <property type="match status" value="1"/>
</dbReference>
<dbReference type="SMART" id="SM00060">
    <property type="entry name" value="FN3"/>
    <property type="match status" value="1"/>
</dbReference>
<dbReference type="SMART" id="SM00409">
    <property type="entry name" value="IG"/>
    <property type="match status" value="1"/>
</dbReference>
<dbReference type="SMART" id="SM00408">
    <property type="entry name" value="IGc2"/>
    <property type="match status" value="1"/>
</dbReference>
<dbReference type="SUPFAM" id="SSF49265">
    <property type="entry name" value="Fibronectin type III"/>
    <property type="match status" value="2"/>
</dbReference>
<dbReference type="SUPFAM" id="SSF48726">
    <property type="entry name" value="Immunoglobulin"/>
    <property type="match status" value="1"/>
</dbReference>
<dbReference type="PROSITE" id="PS50853">
    <property type="entry name" value="FN3"/>
    <property type="match status" value="2"/>
</dbReference>
<dbReference type="PROSITE" id="PS01354">
    <property type="entry name" value="HEMATOPO_REC_L_F3"/>
    <property type="match status" value="1"/>
</dbReference>
<dbReference type="PROSITE" id="PS50835">
    <property type="entry name" value="IG_LIKE"/>
    <property type="match status" value="1"/>
</dbReference>
<evidence type="ECO:0000255" key="1"/>
<evidence type="ECO:0000255" key="2">
    <source>
        <dbReference type="PROSITE-ProRule" id="PRU00114"/>
    </source>
</evidence>
<evidence type="ECO:0000255" key="3">
    <source>
        <dbReference type="PROSITE-ProRule" id="PRU00316"/>
    </source>
</evidence>
<evidence type="ECO:0000256" key="4">
    <source>
        <dbReference type="SAM" id="MobiDB-lite"/>
    </source>
</evidence>
<evidence type="ECO:0000269" key="5">
    <source>
    </source>
</evidence>
<evidence type="ECO:0000269" key="6">
    <source>
    </source>
</evidence>
<evidence type="ECO:0000305" key="7"/>
<evidence type="ECO:0007829" key="8">
    <source>
        <dbReference type="PDB" id="1UC6"/>
    </source>
</evidence>
<evidence type="ECO:0007829" key="9">
    <source>
        <dbReference type="PDB" id="8D74"/>
    </source>
</evidence>
<evidence type="ECO:0007829" key="10">
    <source>
        <dbReference type="PDB" id="8D7E"/>
    </source>
</evidence>
<evidence type="ECO:0007829" key="11">
    <source>
        <dbReference type="PDB" id="8D7H"/>
    </source>
</evidence>
<sequence>MAAPVPWACCAVLAAAAAVVYAQRHSPQEAPHVQYERLGSDVTLPCGTANWDAAVTWRVNGTDLAPDLLNGSQLVLHGLELGHSGLYACFHRDSWHLRHQVLLHVGLPPREPVLSCRSNTYPKGFYCSWHLPTPTYIPNTFNVTVLHGSKIMVCEKDPALKNRCHIRYMHLFSTIKYKVSISVSNALGHNATAITFDEFTIVKPDPPENVVARPVPSNPRRLEVTWQTPSTWPDPESFPLKFFLRYRPLILDQWQHVELSDGTAHTITDAYAGKEYIIQVAAKDNEIGTWSDWSVAAHATPWTEEPRHLTTEAQAAETTTSTTSSLAPPPTTKICDPGELGSGGGPSAPFLVSVPITLALAAAAATASSLLI</sequence>
<protein>
    <recommendedName>
        <fullName>Ciliary neurotrophic factor receptor subunit alpha</fullName>
        <shortName>CNTF receptor subunit alpha</shortName>
        <shortName>CNTFR-alpha</shortName>
    </recommendedName>
</protein>
<comment type="function">
    <text evidence="5 6">Binds to CNTF. The alpha subunit provides the receptor specificity. Receptor for heterodimeric neurotropic cytokine composed of CLCF1/CLC and CRLF1/CLF-1 (PubMed:26858303). Acts as a receptor for the neuroprotective peptide humanin as part of a complex with IL6ST/GP130 and IL27RA/WSX1 (PubMed:19386761).</text>
</comment>
<comment type="subunit">
    <text evidence="5 6">Forms a heterotrimer with LIFR and IL6ST. Interacts with heterodimeric neurotropic cytokine composed of CLCF1/CLC and CRLF1/CLF-1 (PubMed:26858303). Either alone or in complex with the heterodimer CLCF1-CRLF1 interacts with SORL1; this interaction may promote internalization and lysosomal degradation (PubMed:26858303). Component of a receptor complex composed of IL6ST/GP130, IL27RA/WSX1 and CNTFR which interacts with the neuroprotective peptide humanin (PubMed:19386761).</text>
</comment>
<comment type="interaction">
    <interactant intactId="EBI-743758">
        <id>P26992</id>
    </interactant>
    <interactant intactId="EBI-25298664">
        <id>PRO_0000015616</id>
        <label>CLCF1</label>
        <dbReference type="UniProtKB" id="Q9UBD9"/>
    </interactant>
    <organismsDiffer>false</organismsDiffer>
    <experiments>3</experiments>
</comment>
<comment type="interaction">
    <interactant intactId="EBI-743758">
        <id>P26992</id>
    </interactant>
    <interactant intactId="EBI-1050897">
        <id>P26441</id>
        <label>CNTF</label>
    </interactant>
    <organismsDiffer>false</organismsDiffer>
    <experiments>13</experiments>
</comment>
<comment type="interaction">
    <interactant intactId="EBI-743758">
        <id>P26992</id>
    </interactant>
    <interactant intactId="EBI-1171329">
        <id>Q92673</id>
        <label>SORL1</label>
    </interactant>
    <organismsDiffer>false</organismsDiffer>
    <experiments>7</experiments>
</comment>
<comment type="subcellular location">
    <subcellularLocation>
        <location>Cell membrane</location>
        <topology>Lipid-anchor</topology>
        <topology>GPI-anchor</topology>
    </subcellularLocation>
</comment>
<comment type="tissue specificity">
    <text>Nervous system and skeletal muscle.</text>
</comment>
<comment type="domain">
    <text>The WSXWS motif appears to be necessary for proper protein folding and thereby efficient intracellular transport and cell-surface receptor binding.</text>
</comment>
<comment type="similarity">
    <text evidence="7">Belongs to the type I cytokine receptor family. Type 3 subfamily.</text>
</comment>